<protein>
    <recommendedName>
        <fullName evidence="1">DNA mismatch repair protein MutH</fullName>
    </recommendedName>
    <alternativeName>
        <fullName evidence="1">Methyl-directed mismatch repair protein</fullName>
    </alternativeName>
</protein>
<keyword id="KW-0963">Cytoplasm</keyword>
<keyword id="KW-0227">DNA damage</keyword>
<keyword id="KW-0234">DNA repair</keyword>
<keyword id="KW-0255">Endonuclease</keyword>
<keyword id="KW-0378">Hydrolase</keyword>
<keyword id="KW-0540">Nuclease</keyword>
<sequence length="229" mass="25499">MSQPRPLLSPPETEEQLLAQAQQLSGYTLGELAALAGLVTPENLKRDKGWIGVLLEIWLGASAGSKPEQDFAALGVELKTIPVDSLGRPLETTFVCVAPLTGNSGVTWETSHVRHKLKRVLWIPVEGERSIPLAQRRVGSPLLWSPNEEEDRQLREDWEELMDMIVLGQVERITARHGEYLQIRPKAANAKALTEAIGARGERILTLPRGFYLKKNFTSALLARHFLIQ</sequence>
<feature type="chain" id="PRO_1000133466" description="DNA mismatch repair protein MutH">
    <location>
        <begin position="1"/>
        <end position="229"/>
    </location>
</feature>
<accession>B6I6V6</accession>
<dbReference type="EMBL" id="AP009240">
    <property type="protein sequence ID" value="BAG78612.1"/>
    <property type="molecule type" value="Genomic_DNA"/>
</dbReference>
<dbReference type="RefSeq" id="WP_000082188.1">
    <property type="nucleotide sequence ID" value="NC_011415.1"/>
</dbReference>
<dbReference type="SMR" id="B6I6V6"/>
<dbReference type="GeneID" id="93779167"/>
<dbReference type="KEGG" id="ecy:ECSE_3088"/>
<dbReference type="HOGENOM" id="CLU_086669_0_0_6"/>
<dbReference type="Proteomes" id="UP000008199">
    <property type="component" value="Chromosome"/>
</dbReference>
<dbReference type="GO" id="GO:0005737">
    <property type="term" value="C:cytoplasm"/>
    <property type="evidence" value="ECO:0007669"/>
    <property type="project" value="UniProtKB-SubCell"/>
</dbReference>
<dbReference type="GO" id="GO:0003677">
    <property type="term" value="F:DNA binding"/>
    <property type="evidence" value="ECO:0007669"/>
    <property type="project" value="InterPro"/>
</dbReference>
<dbReference type="GO" id="GO:0004519">
    <property type="term" value="F:endonuclease activity"/>
    <property type="evidence" value="ECO:0007669"/>
    <property type="project" value="UniProtKB-UniRule"/>
</dbReference>
<dbReference type="GO" id="GO:0006304">
    <property type="term" value="P:DNA modification"/>
    <property type="evidence" value="ECO:0007669"/>
    <property type="project" value="InterPro"/>
</dbReference>
<dbReference type="GO" id="GO:0006298">
    <property type="term" value="P:mismatch repair"/>
    <property type="evidence" value="ECO:0007669"/>
    <property type="project" value="UniProtKB-UniRule"/>
</dbReference>
<dbReference type="CDD" id="cd00583">
    <property type="entry name" value="MutH-like"/>
    <property type="match status" value="1"/>
</dbReference>
<dbReference type="FunFam" id="3.40.600.10:FF:000001">
    <property type="entry name" value="DNA mismatch repair protein MutH"/>
    <property type="match status" value="1"/>
</dbReference>
<dbReference type="Gene3D" id="3.40.600.10">
    <property type="entry name" value="DNA mismatch repair MutH/Restriction endonuclease, type II"/>
    <property type="match status" value="1"/>
</dbReference>
<dbReference type="HAMAP" id="MF_00759">
    <property type="entry name" value="MutH"/>
    <property type="match status" value="1"/>
</dbReference>
<dbReference type="InterPro" id="IPR004230">
    <property type="entry name" value="DNA_mismatch_repair_MutH"/>
</dbReference>
<dbReference type="InterPro" id="IPR011337">
    <property type="entry name" value="DNA_rep_MutH/RE_typeII_Sau3AI"/>
</dbReference>
<dbReference type="InterPro" id="IPR037057">
    <property type="entry name" value="DNA_rep_MutH/T2_RE_sf"/>
</dbReference>
<dbReference type="InterPro" id="IPR011335">
    <property type="entry name" value="Restrct_endonuc-II-like"/>
</dbReference>
<dbReference type="NCBIfam" id="TIGR02248">
    <property type="entry name" value="mutH_TIGR"/>
    <property type="match status" value="1"/>
</dbReference>
<dbReference type="NCBIfam" id="NF003458">
    <property type="entry name" value="PRK05070.1"/>
    <property type="match status" value="1"/>
</dbReference>
<dbReference type="Pfam" id="PF02976">
    <property type="entry name" value="MutH"/>
    <property type="match status" value="1"/>
</dbReference>
<dbReference type="SMART" id="SM00927">
    <property type="entry name" value="MutH"/>
    <property type="match status" value="1"/>
</dbReference>
<dbReference type="SUPFAM" id="SSF52980">
    <property type="entry name" value="Restriction endonuclease-like"/>
    <property type="match status" value="1"/>
</dbReference>
<gene>
    <name evidence="1" type="primary">mutH</name>
    <name type="ordered locus">ECSE_3088</name>
</gene>
<name>MUTH_ECOSE</name>
<evidence type="ECO:0000255" key="1">
    <source>
        <dbReference type="HAMAP-Rule" id="MF_00759"/>
    </source>
</evidence>
<proteinExistence type="inferred from homology"/>
<comment type="function">
    <text evidence="1">Sequence-specific endonuclease that cleaves unmethylated GATC sequences. It is involved in DNA mismatch repair.</text>
</comment>
<comment type="subcellular location">
    <subcellularLocation>
        <location evidence="1">Cytoplasm</location>
    </subcellularLocation>
</comment>
<comment type="similarity">
    <text evidence="1">Belongs to the MutH family.</text>
</comment>
<organism>
    <name type="scientific">Escherichia coli (strain SE11)</name>
    <dbReference type="NCBI Taxonomy" id="409438"/>
    <lineage>
        <taxon>Bacteria</taxon>
        <taxon>Pseudomonadati</taxon>
        <taxon>Pseudomonadota</taxon>
        <taxon>Gammaproteobacteria</taxon>
        <taxon>Enterobacterales</taxon>
        <taxon>Enterobacteriaceae</taxon>
        <taxon>Escherichia</taxon>
    </lineage>
</organism>
<reference key="1">
    <citation type="journal article" date="2008" name="DNA Res.">
        <title>Complete genome sequence and comparative analysis of the wild-type commensal Escherichia coli strain SE11 isolated from a healthy adult.</title>
        <authorList>
            <person name="Oshima K."/>
            <person name="Toh H."/>
            <person name="Ogura Y."/>
            <person name="Sasamoto H."/>
            <person name="Morita H."/>
            <person name="Park S.-H."/>
            <person name="Ooka T."/>
            <person name="Iyoda S."/>
            <person name="Taylor T.D."/>
            <person name="Hayashi T."/>
            <person name="Itoh K."/>
            <person name="Hattori M."/>
        </authorList>
    </citation>
    <scope>NUCLEOTIDE SEQUENCE [LARGE SCALE GENOMIC DNA]</scope>
    <source>
        <strain>SE11</strain>
    </source>
</reference>